<sequence>MAFGKSLFHAIGRVSLVRQIAAGLALGIVIGSVSPQLGLAAGLFGSLFVGALKAVAPVLVFILVAATIAQHQKGNKAHIRPIIVLYLIGTFSAALTAVIAGMVFPTHIVLAGAGDVSAAPPSGIVEVLKSLLMNLVANPINAIANANYIGILAWALVLGAALRNHGSDVTRQVVADLAEAVSTVVKWIIRFAPLGIFGLVSSTIAETGFGALAGYAKLLAVLLGCMAFIALAVNPAIVWWKIRRNPYPLVFTCLRESGVYAFFTRSSAANIPVNMALAKKLGLHEDTYSISIPLGATVNMGGAAITITVLAMAAAHTQGIQVDFATALLLSLVATVSACGASGVAGGSLLLIPLACSLFGISNDVAMQVVAVGFIIGVIQDSAETALNSSTDVLFTAAADLGRQRNRAE</sequence>
<gene>
    <name evidence="1" type="primary">sstT</name>
    <name type="ordered locus">NGK_2291</name>
</gene>
<accession>B4RQT5</accession>
<protein>
    <recommendedName>
        <fullName evidence="1">Serine/threonine transporter SstT</fullName>
    </recommendedName>
    <alternativeName>
        <fullName evidence="1">Na(+)/serine-threonine symporter</fullName>
    </alternativeName>
</protein>
<name>SSTT_NEIG2</name>
<comment type="function">
    <text evidence="1">Involved in the import of serine and threonine into the cell, with the concomitant import of sodium (symport system).</text>
</comment>
<comment type="catalytic activity">
    <reaction evidence="1">
        <text>L-serine(in) + Na(+)(in) = L-serine(out) + Na(+)(out)</text>
        <dbReference type="Rhea" id="RHEA:29575"/>
        <dbReference type="ChEBI" id="CHEBI:29101"/>
        <dbReference type="ChEBI" id="CHEBI:33384"/>
    </reaction>
    <physiologicalReaction direction="right-to-left" evidence="1">
        <dbReference type="Rhea" id="RHEA:29577"/>
    </physiologicalReaction>
</comment>
<comment type="catalytic activity">
    <reaction evidence="1">
        <text>L-threonine(in) + Na(+)(in) = L-threonine(out) + Na(+)(out)</text>
        <dbReference type="Rhea" id="RHEA:69999"/>
        <dbReference type="ChEBI" id="CHEBI:29101"/>
        <dbReference type="ChEBI" id="CHEBI:57926"/>
    </reaction>
    <physiologicalReaction direction="right-to-left" evidence="1">
        <dbReference type="Rhea" id="RHEA:70001"/>
    </physiologicalReaction>
</comment>
<comment type="subcellular location">
    <subcellularLocation>
        <location evidence="1">Cell inner membrane</location>
        <topology evidence="1">Multi-pass membrane protein</topology>
    </subcellularLocation>
</comment>
<comment type="similarity">
    <text evidence="1">Belongs to the dicarboxylate/amino acid:cation symporter (DAACS) (TC 2.A.23) family.</text>
</comment>
<organism>
    <name type="scientific">Neisseria gonorrhoeae (strain NCCP11945)</name>
    <dbReference type="NCBI Taxonomy" id="521006"/>
    <lineage>
        <taxon>Bacteria</taxon>
        <taxon>Pseudomonadati</taxon>
        <taxon>Pseudomonadota</taxon>
        <taxon>Betaproteobacteria</taxon>
        <taxon>Neisseriales</taxon>
        <taxon>Neisseriaceae</taxon>
        <taxon>Neisseria</taxon>
    </lineage>
</organism>
<proteinExistence type="inferred from homology"/>
<dbReference type="EMBL" id="CP001050">
    <property type="protein sequence ID" value="ACF30895.1"/>
    <property type="molecule type" value="Genomic_DNA"/>
</dbReference>
<dbReference type="RefSeq" id="WP_002215131.1">
    <property type="nucleotide sequence ID" value="NC_011035.1"/>
</dbReference>
<dbReference type="SMR" id="B4RQT5"/>
<dbReference type="GeneID" id="66754162"/>
<dbReference type="KEGG" id="ngk:NGK_2291"/>
<dbReference type="HOGENOM" id="CLU_044581_0_0_4"/>
<dbReference type="Proteomes" id="UP000002564">
    <property type="component" value="Chromosome"/>
</dbReference>
<dbReference type="GO" id="GO:0005886">
    <property type="term" value="C:plasma membrane"/>
    <property type="evidence" value="ECO:0007669"/>
    <property type="project" value="UniProtKB-SubCell"/>
</dbReference>
<dbReference type="GO" id="GO:0005295">
    <property type="term" value="F:neutral L-amino acid:sodium symporter activity"/>
    <property type="evidence" value="ECO:0007669"/>
    <property type="project" value="TreeGrafter"/>
</dbReference>
<dbReference type="GO" id="GO:0032329">
    <property type="term" value="P:serine transport"/>
    <property type="evidence" value="ECO:0007669"/>
    <property type="project" value="InterPro"/>
</dbReference>
<dbReference type="GO" id="GO:0015826">
    <property type="term" value="P:threonine transport"/>
    <property type="evidence" value="ECO:0007669"/>
    <property type="project" value="InterPro"/>
</dbReference>
<dbReference type="FunFam" id="1.10.3860.10:FF:000003">
    <property type="entry name" value="Serine/threonine transporter sstT"/>
    <property type="match status" value="1"/>
</dbReference>
<dbReference type="Gene3D" id="1.10.3860.10">
    <property type="entry name" value="Sodium:dicarboxylate symporter"/>
    <property type="match status" value="1"/>
</dbReference>
<dbReference type="HAMAP" id="MF_01582">
    <property type="entry name" value="Ser_Thr_transp_SstT"/>
    <property type="match status" value="1"/>
</dbReference>
<dbReference type="InterPro" id="IPR001991">
    <property type="entry name" value="Na-dicarboxylate_symporter"/>
</dbReference>
<dbReference type="InterPro" id="IPR036458">
    <property type="entry name" value="Na:dicarbo_symporter_sf"/>
</dbReference>
<dbReference type="InterPro" id="IPR023025">
    <property type="entry name" value="Ser_Thr_transp_SstT"/>
</dbReference>
<dbReference type="NCBIfam" id="NF010151">
    <property type="entry name" value="PRK13628.1"/>
    <property type="match status" value="1"/>
</dbReference>
<dbReference type="PANTHER" id="PTHR42865">
    <property type="entry name" value="PROTON/GLUTAMATE-ASPARTATE SYMPORTER"/>
    <property type="match status" value="1"/>
</dbReference>
<dbReference type="PANTHER" id="PTHR42865:SF8">
    <property type="entry name" value="SERINE_THREONINE TRANSPORTER SSTT"/>
    <property type="match status" value="1"/>
</dbReference>
<dbReference type="Pfam" id="PF00375">
    <property type="entry name" value="SDF"/>
    <property type="match status" value="1"/>
</dbReference>
<dbReference type="PRINTS" id="PR00173">
    <property type="entry name" value="EDTRNSPORT"/>
</dbReference>
<dbReference type="SUPFAM" id="SSF118215">
    <property type="entry name" value="Proton glutamate symport protein"/>
    <property type="match status" value="1"/>
</dbReference>
<evidence type="ECO:0000255" key="1">
    <source>
        <dbReference type="HAMAP-Rule" id="MF_01582"/>
    </source>
</evidence>
<reference key="1">
    <citation type="journal article" date="2008" name="J. Bacteriol.">
        <title>Complete genome sequence of Neisseria gonorrhoeae NCCP11945.</title>
        <authorList>
            <person name="Chung G.T."/>
            <person name="Yoo J.S."/>
            <person name="Oh H.B."/>
            <person name="Lee Y.S."/>
            <person name="Cha S.H."/>
            <person name="Kim S.J."/>
            <person name="Yoo C.K."/>
        </authorList>
    </citation>
    <scope>NUCLEOTIDE SEQUENCE [LARGE SCALE GENOMIC DNA]</scope>
    <source>
        <strain>NCCP11945</strain>
    </source>
</reference>
<keyword id="KW-0029">Amino-acid transport</keyword>
<keyword id="KW-0997">Cell inner membrane</keyword>
<keyword id="KW-1003">Cell membrane</keyword>
<keyword id="KW-0472">Membrane</keyword>
<keyword id="KW-0769">Symport</keyword>
<keyword id="KW-0812">Transmembrane</keyword>
<keyword id="KW-1133">Transmembrane helix</keyword>
<keyword id="KW-0813">Transport</keyword>
<feature type="chain" id="PRO_1000197554" description="Serine/threonine transporter SstT">
    <location>
        <begin position="1"/>
        <end position="409"/>
    </location>
</feature>
<feature type="transmembrane region" description="Helical" evidence="1">
    <location>
        <begin position="24"/>
        <end position="44"/>
    </location>
</feature>
<feature type="transmembrane region" description="Helical" evidence="1">
    <location>
        <begin position="48"/>
        <end position="68"/>
    </location>
</feature>
<feature type="transmembrane region" description="Helical" evidence="1">
    <location>
        <begin position="82"/>
        <end position="102"/>
    </location>
</feature>
<feature type="transmembrane region" description="Helical" evidence="1">
    <location>
        <begin position="142"/>
        <end position="162"/>
    </location>
</feature>
<feature type="transmembrane region" description="Helical" evidence="1">
    <location>
        <begin position="194"/>
        <end position="214"/>
    </location>
</feature>
<feature type="transmembrane region" description="Helical" evidence="1">
    <location>
        <begin position="218"/>
        <end position="238"/>
    </location>
</feature>
<feature type="transmembrane region" description="Helical" evidence="1">
    <location>
        <begin position="292"/>
        <end position="312"/>
    </location>
</feature>
<feature type="transmembrane region" description="Helical" evidence="1">
    <location>
        <begin position="319"/>
        <end position="339"/>
    </location>
</feature>
<feature type="transmembrane region" description="Helical" evidence="1">
    <location>
        <begin position="365"/>
        <end position="385"/>
    </location>
</feature>